<dbReference type="EC" id="3.4.22.-" evidence="2"/>
<dbReference type="EMBL" id="AJ720831">
    <property type="protein sequence ID" value="CAG32490.1"/>
    <property type="molecule type" value="mRNA"/>
</dbReference>
<dbReference type="RefSeq" id="NP_001026307.1">
    <property type="nucleotide sequence ID" value="NM_001031136.1"/>
</dbReference>
<dbReference type="SMR" id="Q5ZIF3"/>
<dbReference type="FunCoup" id="Q5ZIF3">
    <property type="interactions" value="631"/>
</dbReference>
<dbReference type="STRING" id="9031.ENSGALP00000017231"/>
<dbReference type="MEROPS" id="C78.002"/>
<dbReference type="PaxDb" id="9031-ENSGALP00000017231"/>
<dbReference type="GeneID" id="422542"/>
<dbReference type="KEGG" id="gga:422542"/>
<dbReference type="CTD" id="55325"/>
<dbReference type="VEuPathDB" id="HostDB:geneid_422542"/>
<dbReference type="eggNOG" id="KOG2433">
    <property type="taxonomic scope" value="Eukaryota"/>
</dbReference>
<dbReference type="InParanoid" id="Q5ZIF3"/>
<dbReference type="OrthoDB" id="417506at2759"/>
<dbReference type="PhylomeDB" id="Q5ZIF3"/>
<dbReference type="PRO" id="PR:Q5ZIF3"/>
<dbReference type="Proteomes" id="UP000000539">
    <property type="component" value="Unassembled WGS sequence"/>
</dbReference>
<dbReference type="GO" id="GO:0005737">
    <property type="term" value="C:cytoplasm"/>
    <property type="evidence" value="ECO:0000250"/>
    <property type="project" value="UniProtKB"/>
</dbReference>
<dbReference type="GO" id="GO:0005783">
    <property type="term" value="C:endoplasmic reticulum"/>
    <property type="evidence" value="ECO:0000250"/>
    <property type="project" value="UniProtKB"/>
</dbReference>
<dbReference type="GO" id="GO:0005634">
    <property type="term" value="C:nucleus"/>
    <property type="evidence" value="ECO:0000250"/>
    <property type="project" value="UniProtKB"/>
</dbReference>
<dbReference type="GO" id="GO:0071567">
    <property type="term" value="F:deUFMylase activity"/>
    <property type="evidence" value="ECO:0000250"/>
    <property type="project" value="UniProtKB"/>
</dbReference>
<dbReference type="GO" id="GO:0006508">
    <property type="term" value="P:proteolysis"/>
    <property type="evidence" value="ECO:0000250"/>
    <property type="project" value="UniProtKB"/>
</dbReference>
<dbReference type="GO" id="GO:0032790">
    <property type="term" value="P:ribosome disassembly"/>
    <property type="evidence" value="ECO:0000250"/>
    <property type="project" value="UniProtKB"/>
</dbReference>
<dbReference type="FunFam" id="3.90.70.130:FF:000001">
    <property type="entry name" value="Probable Ufm1-specific protease 2"/>
    <property type="match status" value="1"/>
</dbReference>
<dbReference type="Gene3D" id="3.90.70.130">
    <property type="match status" value="1"/>
</dbReference>
<dbReference type="InterPro" id="IPR012462">
    <property type="entry name" value="UfSP1/2_DUB_cat"/>
</dbReference>
<dbReference type="InterPro" id="IPR049387">
    <property type="entry name" value="UfSP2-like_N"/>
</dbReference>
<dbReference type="PANTHER" id="PTHR48153">
    <property type="entry name" value="UFM1-SPECIFIC PROTEASE 2"/>
    <property type="match status" value="1"/>
</dbReference>
<dbReference type="PANTHER" id="PTHR48153:SF2">
    <property type="entry name" value="UFM1-SPECIFIC PROTEASE 2"/>
    <property type="match status" value="1"/>
</dbReference>
<dbReference type="Pfam" id="PF07910">
    <property type="entry name" value="Peptidase_C78"/>
    <property type="match status" value="1"/>
</dbReference>
<dbReference type="Pfam" id="PF20908">
    <property type="entry name" value="UfSP2_N"/>
    <property type="match status" value="1"/>
</dbReference>
<evidence type="ECO:0000250" key="1">
    <source>
        <dbReference type="UniProtKB" id="Q99K23"/>
    </source>
</evidence>
<evidence type="ECO:0000250" key="2">
    <source>
        <dbReference type="UniProtKB" id="Q9NUQ7"/>
    </source>
</evidence>
<evidence type="ECO:0000303" key="3">
    <source>
    </source>
</evidence>
<evidence type="ECO:0000305" key="4"/>
<proteinExistence type="evidence at transcript level"/>
<comment type="function">
    <text evidence="2">Thiol-dependent isopeptidase that specifically cleaves UFM1, a ubiquitin-like modifier protein, from conjugated proteins. While it is also able to mediate the processing of UFM1 precursors, a prerequisite for conjugation reactions, UFSP2 mainly acts as a protein deUFMylase that mediates deconjugation of UFM1 from target proteins.</text>
</comment>
<comment type="subcellular location">
    <subcellularLocation>
        <location evidence="1">Endoplasmic reticulum</location>
    </subcellularLocation>
    <subcellularLocation>
        <location evidence="1">Cytoplasm</location>
    </subcellularLocation>
    <subcellularLocation>
        <location evidence="1">Nucleus</location>
    </subcellularLocation>
</comment>
<comment type="similarity">
    <text evidence="4">Belongs to the peptidase C78 family.</text>
</comment>
<organism>
    <name type="scientific">Gallus gallus</name>
    <name type="common">Chicken</name>
    <dbReference type="NCBI Taxonomy" id="9031"/>
    <lineage>
        <taxon>Eukaryota</taxon>
        <taxon>Metazoa</taxon>
        <taxon>Chordata</taxon>
        <taxon>Craniata</taxon>
        <taxon>Vertebrata</taxon>
        <taxon>Euteleostomi</taxon>
        <taxon>Archelosauria</taxon>
        <taxon>Archosauria</taxon>
        <taxon>Dinosauria</taxon>
        <taxon>Saurischia</taxon>
        <taxon>Theropoda</taxon>
        <taxon>Coelurosauria</taxon>
        <taxon>Aves</taxon>
        <taxon>Neognathae</taxon>
        <taxon>Galloanserae</taxon>
        <taxon>Galliformes</taxon>
        <taxon>Phasianidae</taxon>
        <taxon>Phasianinae</taxon>
        <taxon>Gallus</taxon>
    </lineage>
</organism>
<accession>Q5ZIF3</accession>
<name>UFSP2_CHICK</name>
<reference key="1">
    <citation type="journal article" date="2005" name="Genome Biol.">
        <title>Full-length cDNAs from chicken bursal lymphocytes to facilitate gene function analysis.</title>
        <authorList>
            <person name="Caldwell R.B."/>
            <person name="Kierzek A.M."/>
            <person name="Arakawa H."/>
            <person name="Bezzubov Y."/>
            <person name="Zaim J."/>
            <person name="Fiedler P."/>
            <person name="Kutter S."/>
            <person name="Blagodatski A."/>
            <person name="Kostovska D."/>
            <person name="Koter M."/>
            <person name="Plachy J."/>
            <person name="Carninci P."/>
            <person name="Hayashizaki Y."/>
            <person name="Buerstedde J.-M."/>
        </authorList>
    </citation>
    <scope>NUCLEOTIDE SEQUENCE [LARGE SCALE MRNA]</scope>
    <source>
        <strain>CB</strain>
        <tissue>Bursa of Fabricius</tissue>
    </source>
</reference>
<feature type="chain" id="PRO_0000280366" description="Ufm1-specific protease 2">
    <location>
        <begin position="1"/>
        <end position="460"/>
    </location>
</feature>
<feature type="active site" evidence="1">
    <location>
        <position position="293"/>
    </location>
</feature>
<feature type="active site" evidence="1">
    <location>
        <position position="417"/>
    </location>
</feature>
<feature type="active site" evidence="1">
    <location>
        <position position="419"/>
    </location>
</feature>
<keyword id="KW-0963">Cytoplasm</keyword>
<keyword id="KW-0256">Endoplasmic reticulum</keyword>
<keyword id="KW-0378">Hydrolase</keyword>
<keyword id="KW-0539">Nucleus</keyword>
<keyword id="KW-0645">Protease</keyword>
<keyword id="KW-1185">Reference proteome</keyword>
<keyword id="KW-0788">Thiol protease</keyword>
<keyword id="KW-0833">Ubl conjugation pathway</keyword>
<gene>
    <name evidence="2" type="primary">UFSP2</name>
    <name evidence="3" type="ORF">RCJMB04_27c22</name>
</gene>
<sequence length="460" mass="52099">MDILFRIRGGLDLAFQLATTDEASAKSVLKYVFSDLANKLSSDVLVLRICNSSVYVWPNNGINTVPELTDDSACKEIKRFVHFDQDDETRRKLGKKKDKKLQDMVINIDLMLEMTSSSDALAPVIERENKEHHYINMTLPVDVVVSVSPDETWGKVQNLLVKAIHKQLTDMERCIMKYMKGTSIVVPEQFHFMLPGKNHLVTISYPTGISDDQLESYRKELHGLFNLPCDRPYFKRANAYHFPDEPYKDGYLKNPHLHLNSPGPESGVVYLVHGTYSYHHYMQDRTDDSGWGCAYRSLQTICSWFKQQGYVDAPIPTHKEIQQALVDAGDKPAAFVGSRQWIGSVEVQLVLNQLFGITSKILFVSQGSELALQGRELANHFKTEGTPVMIGGGVLAHTILGVAWNEMTGQIKYLILDPHYTGGEDLHVILDKGWCAWKGPDFWSKDAYYNLCLPQRPKTI</sequence>
<protein>
    <recommendedName>
        <fullName evidence="2">Ufm1-specific protease 2</fullName>
        <shortName evidence="2">UfSP2</shortName>
        <ecNumber evidence="2">3.4.22.-</ecNumber>
    </recommendedName>
</protein>